<organismHost>
    <name type="scientific">Saccharolobus islandicus</name>
    <name type="common">Sulfolobus islandicus</name>
    <dbReference type="NCBI Taxonomy" id="43080"/>
</organismHost>
<sequence length="356" mass="42047">MQKTIFYVYPQHHDVSFKFVAQEHVKMLREKYIVYEIPTLSFYQFTPFRYPISIIHPLFYSMWKWGKIEFSFFEQYRTRVSALLGVEVADTDKIAKQYIEYANNFTDGMILNSEWSVNAFKNSGLKVPAYKVFHNFKDRLLAKNEELKLDDQILYIEKLKKEKNFKLIFISLWHSDYRKGADIFHVIAKELQKERNDIYFLVKSGLPRTDFQDLKMFNIFGNTSFDNIVKMYRISDLYLLTSRGGSFELNGLEAFISKIPALATKGGAWEDYYPPNLKDLLIDSCENPQIFPDNPIHIGNGVQMCIGKAIDKILEVLDNYDNYKAKIEENYNFWIENFSYNAVKKQLLEVMEKYSN</sequence>
<name>Y356_SIRV1</name>
<organism>
    <name type="scientific">Sulfolobus islandicus rod-shaped virus 1</name>
    <name type="common">SIRV-1</name>
    <name type="synonym">Sulfolobus virus SIRV-1</name>
    <dbReference type="NCBI Taxonomy" id="157898"/>
    <lineage>
        <taxon>Viruses</taxon>
        <taxon>Adnaviria</taxon>
        <taxon>Zilligvirae</taxon>
        <taxon>Taleaviricota</taxon>
        <taxon>Tokiviricetes</taxon>
        <taxon>Ligamenvirales</taxon>
        <taxon>Rudiviridae</taxon>
        <taxon>Icerudivirus</taxon>
        <taxon>Icerudivirus SIRV1</taxon>
    </lineage>
</organism>
<reference key="1">
    <citation type="journal article" date="2001" name="Virology">
        <title>Sequences and replication of genomes of the archaeal rudiviruses SIRV1 and SIRV2: relationships to the archaeal lipothrixvirus SIFV and some eukaryal viruses.</title>
        <authorList>
            <person name="Peng X."/>
            <person name="Blum H."/>
            <person name="She Q."/>
            <person name="Mallok S."/>
            <person name="Bruegger K."/>
            <person name="Garrett R.A."/>
            <person name="Zillig W."/>
            <person name="Prangishvili D."/>
        </authorList>
    </citation>
    <scope>NUCLEOTIDE SEQUENCE [LARGE SCALE GENOMIC DNA]</scope>
    <source>
        <strain>Isolate variant VIII</strain>
    </source>
</reference>
<reference key="2">
    <citation type="journal article" date="2004" name="Mol. Microbiol.">
        <title>Multiple variants of the archaeal DNA rudivirus SIRV1 in a single host and a novel mechanism of genomic variation.</title>
        <authorList>
            <person name="Peng X."/>
            <person name="Kessler A."/>
            <person name="Phan H."/>
            <person name="Garrett R.A."/>
            <person name="Prangishvili D."/>
        </authorList>
    </citation>
    <scope>NUCLEOTIDE SEQUENCE [LARGE SCALE GENOMIC DNA]</scope>
    <source>
        <strain>Isolate variant XX</strain>
    </source>
</reference>
<gene>
    <name type="ORF">356</name>
</gene>
<protein>
    <recommendedName>
        <fullName>Uncharacterized protein 356</fullName>
    </recommendedName>
</protein>
<proteinExistence type="predicted"/>
<accession>Q8QL20</accession>
<accession>Q5TJ83</accession>
<dbReference type="EMBL" id="AJ414696">
    <property type="protein sequence ID" value="CAC93991.1"/>
    <property type="molecule type" value="Genomic_DNA"/>
</dbReference>
<dbReference type="EMBL" id="AJ748296">
    <property type="protein sequence ID" value="CAG38855.1"/>
    <property type="molecule type" value="Genomic_DNA"/>
</dbReference>
<dbReference type="RefSeq" id="NP_666624.1">
    <property type="nucleotide sequence ID" value="NC_004087.1"/>
</dbReference>
<dbReference type="SMR" id="Q8QL20"/>
<dbReference type="CAZy" id="GT4">
    <property type="family name" value="Glycosyltransferase Family 4"/>
</dbReference>
<dbReference type="KEGG" id="vg:951374"/>
<dbReference type="OrthoDB" id="3965at10239"/>
<dbReference type="Proteomes" id="UP000002270">
    <property type="component" value="Genome"/>
</dbReference>
<dbReference type="Proteomes" id="UP000223181">
    <property type="component" value="Segment"/>
</dbReference>
<dbReference type="Gene3D" id="3.40.50.2000">
    <property type="entry name" value="Glycogen Phosphorylase B"/>
    <property type="match status" value="1"/>
</dbReference>
<dbReference type="SUPFAM" id="SSF53756">
    <property type="entry name" value="UDP-Glycosyltransferase/glycogen phosphorylase"/>
    <property type="match status" value="1"/>
</dbReference>
<keyword id="KW-1185">Reference proteome</keyword>
<feature type="chain" id="PRO_0000342300" description="Uncharacterized protein 356">
    <location>
        <begin position="1"/>
        <end position="356"/>
    </location>
</feature>